<comment type="function">
    <text evidence="1">Part of the ABC transporter complex PstSACB involved in phosphate import. Responsible for energy coupling to the transport system.</text>
</comment>
<comment type="catalytic activity">
    <reaction evidence="1">
        <text>phosphate(out) + ATP + H2O = ADP + 2 phosphate(in) + H(+)</text>
        <dbReference type="Rhea" id="RHEA:24440"/>
        <dbReference type="ChEBI" id="CHEBI:15377"/>
        <dbReference type="ChEBI" id="CHEBI:15378"/>
        <dbReference type="ChEBI" id="CHEBI:30616"/>
        <dbReference type="ChEBI" id="CHEBI:43474"/>
        <dbReference type="ChEBI" id="CHEBI:456216"/>
        <dbReference type="EC" id="7.3.2.1"/>
    </reaction>
</comment>
<comment type="subunit">
    <text evidence="1">The complex is composed of two ATP-binding proteins (PstB), two transmembrane proteins (PstC and PstA) and a solute-binding protein (PstS).</text>
</comment>
<comment type="subcellular location">
    <subcellularLocation>
        <location evidence="1">Cell membrane</location>
        <topology evidence="1">Peripheral membrane protein</topology>
    </subcellularLocation>
</comment>
<comment type="similarity">
    <text evidence="1">Belongs to the ABC transporter superfamily. Phosphate importer (TC 3.A.1.7) family.</text>
</comment>
<accession>Q1JLH7</accession>
<name>PSTB1_STRPC</name>
<dbReference type="EC" id="7.3.2.1" evidence="1"/>
<dbReference type="EMBL" id="CP000259">
    <property type="protein sequence ID" value="ABF32242.1"/>
    <property type="molecule type" value="Genomic_DNA"/>
</dbReference>
<dbReference type="SMR" id="Q1JLH7"/>
<dbReference type="KEGG" id="spk:MGAS9429_Spy1055"/>
<dbReference type="HOGENOM" id="CLU_000604_1_22_9"/>
<dbReference type="Proteomes" id="UP000002433">
    <property type="component" value="Chromosome"/>
</dbReference>
<dbReference type="GO" id="GO:0005886">
    <property type="term" value="C:plasma membrane"/>
    <property type="evidence" value="ECO:0007669"/>
    <property type="project" value="UniProtKB-SubCell"/>
</dbReference>
<dbReference type="GO" id="GO:0005524">
    <property type="term" value="F:ATP binding"/>
    <property type="evidence" value="ECO:0007669"/>
    <property type="project" value="UniProtKB-KW"/>
</dbReference>
<dbReference type="GO" id="GO:0016887">
    <property type="term" value="F:ATP hydrolysis activity"/>
    <property type="evidence" value="ECO:0007669"/>
    <property type="project" value="InterPro"/>
</dbReference>
<dbReference type="GO" id="GO:0015415">
    <property type="term" value="F:ATPase-coupled phosphate ion transmembrane transporter activity"/>
    <property type="evidence" value="ECO:0007669"/>
    <property type="project" value="UniProtKB-EC"/>
</dbReference>
<dbReference type="GO" id="GO:0035435">
    <property type="term" value="P:phosphate ion transmembrane transport"/>
    <property type="evidence" value="ECO:0007669"/>
    <property type="project" value="InterPro"/>
</dbReference>
<dbReference type="CDD" id="cd03260">
    <property type="entry name" value="ABC_PstB_phosphate_transporter"/>
    <property type="match status" value="1"/>
</dbReference>
<dbReference type="Gene3D" id="3.40.50.300">
    <property type="entry name" value="P-loop containing nucleotide triphosphate hydrolases"/>
    <property type="match status" value="1"/>
</dbReference>
<dbReference type="InterPro" id="IPR003593">
    <property type="entry name" value="AAA+_ATPase"/>
</dbReference>
<dbReference type="InterPro" id="IPR003439">
    <property type="entry name" value="ABC_transporter-like_ATP-bd"/>
</dbReference>
<dbReference type="InterPro" id="IPR017871">
    <property type="entry name" value="ABC_transporter-like_CS"/>
</dbReference>
<dbReference type="InterPro" id="IPR027417">
    <property type="entry name" value="P-loop_NTPase"/>
</dbReference>
<dbReference type="InterPro" id="IPR005670">
    <property type="entry name" value="PstB-like"/>
</dbReference>
<dbReference type="NCBIfam" id="TIGR00972">
    <property type="entry name" value="3a0107s01c2"/>
    <property type="match status" value="1"/>
</dbReference>
<dbReference type="PANTHER" id="PTHR43423">
    <property type="entry name" value="ABC TRANSPORTER I FAMILY MEMBER 17"/>
    <property type="match status" value="1"/>
</dbReference>
<dbReference type="PANTHER" id="PTHR43423:SF1">
    <property type="entry name" value="ABC TRANSPORTER I FAMILY MEMBER 17"/>
    <property type="match status" value="1"/>
</dbReference>
<dbReference type="Pfam" id="PF00005">
    <property type="entry name" value="ABC_tran"/>
    <property type="match status" value="1"/>
</dbReference>
<dbReference type="SMART" id="SM00382">
    <property type="entry name" value="AAA"/>
    <property type="match status" value="1"/>
</dbReference>
<dbReference type="SUPFAM" id="SSF52540">
    <property type="entry name" value="P-loop containing nucleoside triphosphate hydrolases"/>
    <property type="match status" value="1"/>
</dbReference>
<dbReference type="PROSITE" id="PS00211">
    <property type="entry name" value="ABC_TRANSPORTER_1"/>
    <property type="match status" value="1"/>
</dbReference>
<dbReference type="PROSITE" id="PS50893">
    <property type="entry name" value="ABC_TRANSPORTER_2"/>
    <property type="match status" value="1"/>
</dbReference>
<dbReference type="PROSITE" id="PS51238">
    <property type="entry name" value="PSTB"/>
    <property type="match status" value="1"/>
</dbReference>
<proteinExistence type="inferred from homology"/>
<sequence>MMTESILQIRDLSVYYNQKKTLKDVSLDLYPNEITALIGPSGSGKSTLLRSINRMNDLNPEVTITGSIVYNGHNIYSPRTDTVDLRKEIGMVFQQPNPFPMSIYENVVYGLRLKGIRDKSILDHAVESSLKGASIWNEVKDRLHDSAVGLSGGQQQRVCIARVLATSPRIILLDEPTSALDPISAGKIEETLLLLKKDYTLAIVTRSMQQASRLSDRTGFFLEGDLLECGPTKAMFMNPKRKETEDYISGKFG</sequence>
<keyword id="KW-0067">ATP-binding</keyword>
<keyword id="KW-1003">Cell membrane</keyword>
<keyword id="KW-0472">Membrane</keyword>
<keyword id="KW-0547">Nucleotide-binding</keyword>
<keyword id="KW-0592">Phosphate transport</keyword>
<keyword id="KW-1278">Translocase</keyword>
<keyword id="KW-0813">Transport</keyword>
<gene>
    <name evidence="1" type="primary">pstB1</name>
    <name type="ordered locus">MGAS9429_Spy1055</name>
</gene>
<feature type="chain" id="PRO_0000272543" description="Phosphate import ATP-binding protein PstB 1">
    <location>
        <begin position="1"/>
        <end position="253"/>
    </location>
</feature>
<feature type="domain" description="ABC transporter" evidence="1">
    <location>
        <begin position="7"/>
        <end position="248"/>
    </location>
</feature>
<feature type="binding site" evidence="1">
    <location>
        <begin position="39"/>
        <end position="46"/>
    </location>
    <ligand>
        <name>ATP</name>
        <dbReference type="ChEBI" id="CHEBI:30616"/>
    </ligand>
</feature>
<protein>
    <recommendedName>
        <fullName evidence="1">Phosphate import ATP-binding protein PstB 1</fullName>
        <ecNumber evidence="1">7.3.2.1</ecNumber>
    </recommendedName>
    <alternativeName>
        <fullName evidence="1">ABC phosphate transporter 1</fullName>
    </alternativeName>
    <alternativeName>
        <fullName evidence="1">Phosphate-transporting ATPase 1</fullName>
    </alternativeName>
</protein>
<reference key="1">
    <citation type="journal article" date="2006" name="Proc. Natl. Acad. Sci. U.S.A.">
        <title>Molecular genetic anatomy of inter- and intraserotype variation in the human bacterial pathogen group A Streptococcus.</title>
        <authorList>
            <person name="Beres S.B."/>
            <person name="Richter E.W."/>
            <person name="Nagiec M.J."/>
            <person name="Sumby P."/>
            <person name="Porcella S.F."/>
            <person name="DeLeo F.R."/>
            <person name="Musser J.M."/>
        </authorList>
    </citation>
    <scope>NUCLEOTIDE SEQUENCE [LARGE SCALE GENOMIC DNA]</scope>
    <source>
        <strain>MGAS9429</strain>
    </source>
</reference>
<organism>
    <name type="scientific">Streptococcus pyogenes serotype M12 (strain MGAS9429)</name>
    <dbReference type="NCBI Taxonomy" id="370551"/>
    <lineage>
        <taxon>Bacteria</taxon>
        <taxon>Bacillati</taxon>
        <taxon>Bacillota</taxon>
        <taxon>Bacilli</taxon>
        <taxon>Lactobacillales</taxon>
        <taxon>Streptococcaceae</taxon>
        <taxon>Streptococcus</taxon>
    </lineage>
</organism>
<evidence type="ECO:0000255" key="1">
    <source>
        <dbReference type="HAMAP-Rule" id="MF_01702"/>
    </source>
</evidence>